<gene>
    <name type="primary">aacC2</name>
</gene>
<organism>
    <name type="scientific">Acinetobacter baumannii</name>
    <dbReference type="NCBI Taxonomy" id="470"/>
    <lineage>
        <taxon>Bacteria</taxon>
        <taxon>Pseudomonadati</taxon>
        <taxon>Pseudomonadota</taxon>
        <taxon>Gammaproteobacteria</taxon>
        <taxon>Moraxellales</taxon>
        <taxon>Moraxellaceae</taxon>
        <taxon>Acinetobacter</taxon>
        <taxon>Acinetobacter calcoaceticus/baumannii complex</taxon>
    </lineage>
</organism>
<dbReference type="EC" id="2.3.1.81"/>
<dbReference type="EMBL" id="M62833">
    <property type="protein sequence ID" value="AAA21890.1"/>
    <property type="molecule type" value="Genomic_DNA"/>
</dbReference>
<dbReference type="SMR" id="P29807"/>
<dbReference type="eggNOG" id="COG2746">
    <property type="taxonomic scope" value="Bacteria"/>
</dbReference>
<dbReference type="BRENDA" id="2.3.1.81">
    <property type="organism ID" value="98"/>
</dbReference>
<dbReference type="GO" id="GO:0046353">
    <property type="term" value="F:aminoglycoside 3-N-acetyltransferase activity"/>
    <property type="evidence" value="ECO:0007669"/>
    <property type="project" value="UniProtKB-EC"/>
</dbReference>
<dbReference type="GO" id="GO:0046677">
    <property type="term" value="P:response to antibiotic"/>
    <property type="evidence" value="ECO:0007669"/>
    <property type="project" value="UniProtKB-KW"/>
</dbReference>
<dbReference type="InterPro" id="IPR003679">
    <property type="entry name" value="Amioglycoside_AcTrfase"/>
</dbReference>
<dbReference type="InterPro" id="IPR028345">
    <property type="entry name" value="Antibiotic_NAT-like"/>
</dbReference>
<dbReference type="NCBIfam" id="NF033082">
    <property type="entry name" value="AAC_3"/>
    <property type="match status" value="1"/>
</dbReference>
<dbReference type="NCBIfam" id="NF033080">
    <property type="entry name" value="AAC_3_II"/>
    <property type="match status" value="1"/>
</dbReference>
<dbReference type="PANTHER" id="PTHR11104">
    <property type="entry name" value="AMINOGLYCOSIDE N3-ACETYLTRANSFERASE"/>
    <property type="match status" value="1"/>
</dbReference>
<dbReference type="PANTHER" id="PTHR11104:SF0">
    <property type="entry name" value="SPBETA PROPHAGE-DERIVED AMINOGLYCOSIDE N(3')-ACETYLTRANSFERASE-LIKE PROTEIN YOKD"/>
    <property type="match status" value="1"/>
</dbReference>
<dbReference type="Pfam" id="PF02522">
    <property type="entry name" value="Antibiotic_NAT"/>
    <property type="match status" value="1"/>
</dbReference>
<dbReference type="SUPFAM" id="SSF110710">
    <property type="entry name" value="TTHA0583/YokD-like"/>
    <property type="match status" value="1"/>
</dbReference>
<evidence type="ECO:0000305" key="1"/>
<sequence>MHTRKAITEAIRKLGVQTGDLLMVHASLKAIGPVEGGAETVVAALRSAVGPTGTVMGYASWDRSPYEETLNGARLDDKARRTWPPFDPATAGTYRGFGLLNQFLVQAPGARRSAHPDASMVAVGPLAETLTEPHELGHALGKGSPVERFVRLGGKALLLGAPLNSVTALHYAEAVADIPNKRWVTYEMPMLGRNGEVAWKTASEYDSNGILDCFAIEGKPDAVETIANAYVKLGRHREGVVGFAQCYLFDAQDIVTFGVTYLEKHFGATPIVPAHEAAQRSCEPSG</sequence>
<protein>
    <recommendedName>
        <fullName>Aminoglycoside N(3)-acetyltransferase III</fullName>
        <ecNumber>2.3.1.81</ecNumber>
    </recommendedName>
    <alternativeName>
        <fullName>AAC(3)II</fullName>
    </alternativeName>
    <alternativeName>
        <fullName>Gentamicin-(3)-N-acetyl-transferase</fullName>
    </alternativeName>
</protein>
<reference key="1">
    <citation type="journal article" date="1994" name="J. Antimicrob. Chemother.">
        <title>High level kanamycin resistance associated with the hyperproduction of AAC(3)II and a generalised reduction in the accumulation of aminoglycosides in Acinetobacter spp.</title>
        <authorList>
            <person name="Elisha B.G."/>
            <person name="Steyn L.M."/>
        </authorList>
    </citation>
    <scope>NUCLEOTIDE SEQUENCE [GENOMIC DNA]</scope>
    <source>
        <strain>SAK</strain>
    </source>
</reference>
<feature type="chain" id="PRO_0000068542" description="Aminoglycoside N(3)-acetyltransferase III">
    <location>
        <begin position="1"/>
        <end position="286"/>
    </location>
</feature>
<name>AACC2_ACIBA</name>
<proteinExistence type="inferred from homology"/>
<keyword id="KW-0012">Acyltransferase</keyword>
<keyword id="KW-0046">Antibiotic resistance</keyword>
<keyword id="KW-0808">Transferase</keyword>
<comment type="function">
    <text>Resistance to antibiotics containing the 2-deoxy-streptamine ring including gentamicin, kanamycin, tobramycin, neomycin and apramycin.</text>
</comment>
<comment type="catalytic activity">
    <reaction>
        <text>a 2-deoxystreptamine antibiotic + acetyl-CoA = an N(3)-acetyl-2-deoxystreptamine antibiotic + CoA + H(+)</text>
        <dbReference type="Rhea" id="RHEA:12665"/>
        <dbReference type="ChEBI" id="CHEBI:15378"/>
        <dbReference type="ChEBI" id="CHEBI:57287"/>
        <dbReference type="ChEBI" id="CHEBI:57288"/>
        <dbReference type="ChEBI" id="CHEBI:57921"/>
        <dbReference type="ChEBI" id="CHEBI:77452"/>
        <dbReference type="EC" id="2.3.1.81"/>
    </reaction>
</comment>
<comment type="similarity">
    <text evidence="1">Belongs to the antibiotic N-acetyltransferase family.</text>
</comment>
<accession>P29807</accession>